<comment type="function">
    <text evidence="1">Catalyzes the interconversion of 2-phosphoglycerate and 3-phosphoglycerate.</text>
</comment>
<comment type="catalytic activity">
    <reaction evidence="1">
        <text>(2R)-2-phosphoglycerate = (2R)-3-phosphoglycerate</text>
        <dbReference type="Rhea" id="RHEA:15901"/>
        <dbReference type="ChEBI" id="CHEBI:58272"/>
        <dbReference type="ChEBI" id="CHEBI:58289"/>
        <dbReference type="EC" id="5.4.2.11"/>
    </reaction>
</comment>
<comment type="pathway">
    <text evidence="1">Carbohydrate degradation; glycolysis; pyruvate from D-glyceraldehyde 3-phosphate: step 3/5.</text>
</comment>
<comment type="subunit">
    <text evidence="1">Homodimer.</text>
</comment>
<comment type="similarity">
    <text evidence="1">Belongs to the phosphoglycerate mutase family. BPG-dependent PGAM subfamily.</text>
</comment>
<sequence>MYKLVLIRHGESTWNKENRFTGWVDVDLTEQGRNEAYQAGELLKEAGYTFDIAYTSVLKRAIRTLWHVQDRMDLMYLPVVHSWRLNERHYGALSGLNKAETAAKFGDDQVLVWRRSYDTPPPALEPTDERAPFNDPRYAKVPREQLPLTECLKDTVARVLPLWNESIAPAVRSGKQVLIAAHGNSLRALIKYLDGISDSDIVGLNIPNGVPLVYELDEDLKPIQHYYLGDQDAIAKAQAAVAKQGKAG</sequence>
<organism>
    <name type="scientific">Burkholderia ambifaria (strain ATCC BAA-244 / DSM 16087 / CCUG 44356 / LMG 19182 / AMMD)</name>
    <name type="common">Burkholderia cepacia (strain AMMD)</name>
    <dbReference type="NCBI Taxonomy" id="339670"/>
    <lineage>
        <taxon>Bacteria</taxon>
        <taxon>Pseudomonadati</taxon>
        <taxon>Pseudomonadota</taxon>
        <taxon>Betaproteobacteria</taxon>
        <taxon>Burkholderiales</taxon>
        <taxon>Burkholderiaceae</taxon>
        <taxon>Burkholderia</taxon>
        <taxon>Burkholderia cepacia complex</taxon>
    </lineage>
</organism>
<accession>Q0BBK5</accession>
<dbReference type="EC" id="5.4.2.11" evidence="1"/>
<dbReference type="EMBL" id="CP000440">
    <property type="protein sequence ID" value="ABI88468.1"/>
    <property type="molecule type" value="Genomic_DNA"/>
</dbReference>
<dbReference type="RefSeq" id="WP_011658011.1">
    <property type="nucleotide sequence ID" value="NC_008390.1"/>
</dbReference>
<dbReference type="SMR" id="Q0BBK5"/>
<dbReference type="GeneID" id="93084886"/>
<dbReference type="KEGG" id="bam:Bamb_2912"/>
<dbReference type="PATRIC" id="fig|339670.21.peg.1968"/>
<dbReference type="eggNOG" id="COG0588">
    <property type="taxonomic scope" value="Bacteria"/>
</dbReference>
<dbReference type="UniPathway" id="UPA00109">
    <property type="reaction ID" value="UER00186"/>
</dbReference>
<dbReference type="Proteomes" id="UP000000662">
    <property type="component" value="Chromosome 1"/>
</dbReference>
<dbReference type="GO" id="GO:0004619">
    <property type="term" value="F:phosphoglycerate mutase activity"/>
    <property type="evidence" value="ECO:0007669"/>
    <property type="project" value="UniProtKB-EC"/>
</dbReference>
<dbReference type="GO" id="GO:0006094">
    <property type="term" value="P:gluconeogenesis"/>
    <property type="evidence" value="ECO:0007669"/>
    <property type="project" value="UniProtKB-UniRule"/>
</dbReference>
<dbReference type="GO" id="GO:0006096">
    <property type="term" value="P:glycolytic process"/>
    <property type="evidence" value="ECO:0007669"/>
    <property type="project" value="UniProtKB-UniRule"/>
</dbReference>
<dbReference type="CDD" id="cd07067">
    <property type="entry name" value="HP_PGM_like"/>
    <property type="match status" value="1"/>
</dbReference>
<dbReference type="FunFam" id="3.40.50.1240:FF:000003">
    <property type="entry name" value="2,3-bisphosphoglycerate-dependent phosphoglycerate mutase"/>
    <property type="match status" value="1"/>
</dbReference>
<dbReference type="Gene3D" id="3.40.50.1240">
    <property type="entry name" value="Phosphoglycerate mutase-like"/>
    <property type="match status" value="1"/>
</dbReference>
<dbReference type="HAMAP" id="MF_01039">
    <property type="entry name" value="PGAM_GpmA"/>
    <property type="match status" value="1"/>
</dbReference>
<dbReference type="InterPro" id="IPR013078">
    <property type="entry name" value="His_Pase_superF_clade-1"/>
</dbReference>
<dbReference type="InterPro" id="IPR029033">
    <property type="entry name" value="His_PPase_superfam"/>
</dbReference>
<dbReference type="InterPro" id="IPR001345">
    <property type="entry name" value="PG/BPGM_mutase_AS"/>
</dbReference>
<dbReference type="InterPro" id="IPR005952">
    <property type="entry name" value="Phosphogly_mut1"/>
</dbReference>
<dbReference type="NCBIfam" id="TIGR01258">
    <property type="entry name" value="pgm_1"/>
    <property type="match status" value="1"/>
</dbReference>
<dbReference type="NCBIfam" id="NF010713">
    <property type="entry name" value="PRK14115.1"/>
    <property type="match status" value="1"/>
</dbReference>
<dbReference type="PANTHER" id="PTHR11931">
    <property type="entry name" value="PHOSPHOGLYCERATE MUTASE"/>
    <property type="match status" value="1"/>
</dbReference>
<dbReference type="Pfam" id="PF00300">
    <property type="entry name" value="His_Phos_1"/>
    <property type="match status" value="1"/>
</dbReference>
<dbReference type="PIRSF" id="PIRSF000709">
    <property type="entry name" value="6PFK_2-Ptase"/>
    <property type="match status" value="1"/>
</dbReference>
<dbReference type="SMART" id="SM00855">
    <property type="entry name" value="PGAM"/>
    <property type="match status" value="1"/>
</dbReference>
<dbReference type="SUPFAM" id="SSF53254">
    <property type="entry name" value="Phosphoglycerate mutase-like"/>
    <property type="match status" value="1"/>
</dbReference>
<dbReference type="PROSITE" id="PS00175">
    <property type="entry name" value="PG_MUTASE"/>
    <property type="match status" value="1"/>
</dbReference>
<name>GPMA_BURCM</name>
<protein>
    <recommendedName>
        <fullName evidence="1">2,3-bisphosphoglycerate-dependent phosphoglycerate mutase</fullName>
        <shortName evidence="1">BPG-dependent PGAM</shortName>
        <shortName evidence="1">PGAM</shortName>
        <shortName evidence="1">Phosphoglyceromutase</shortName>
        <shortName evidence="1">dPGM</shortName>
        <ecNumber evidence="1">5.4.2.11</ecNumber>
    </recommendedName>
</protein>
<evidence type="ECO:0000255" key="1">
    <source>
        <dbReference type="HAMAP-Rule" id="MF_01039"/>
    </source>
</evidence>
<feature type="chain" id="PRO_1000064038" description="2,3-bisphosphoglycerate-dependent phosphoglycerate mutase">
    <location>
        <begin position="1"/>
        <end position="248"/>
    </location>
</feature>
<feature type="active site" description="Tele-phosphohistidine intermediate" evidence="1">
    <location>
        <position position="9"/>
    </location>
</feature>
<feature type="active site" description="Proton donor/acceptor" evidence="1">
    <location>
        <position position="87"/>
    </location>
</feature>
<feature type="binding site" evidence="1">
    <location>
        <begin position="8"/>
        <end position="15"/>
    </location>
    <ligand>
        <name>substrate</name>
    </ligand>
</feature>
<feature type="binding site" evidence="1">
    <location>
        <begin position="21"/>
        <end position="22"/>
    </location>
    <ligand>
        <name>substrate</name>
    </ligand>
</feature>
<feature type="binding site" evidence="1">
    <location>
        <position position="60"/>
    </location>
    <ligand>
        <name>substrate</name>
    </ligand>
</feature>
<feature type="binding site" evidence="1">
    <location>
        <begin position="87"/>
        <end position="90"/>
    </location>
    <ligand>
        <name>substrate</name>
    </ligand>
</feature>
<feature type="binding site" evidence="1">
    <location>
        <position position="98"/>
    </location>
    <ligand>
        <name>substrate</name>
    </ligand>
</feature>
<feature type="binding site" evidence="1">
    <location>
        <begin position="114"/>
        <end position="115"/>
    </location>
    <ligand>
        <name>substrate</name>
    </ligand>
</feature>
<feature type="binding site" evidence="1">
    <location>
        <begin position="183"/>
        <end position="184"/>
    </location>
    <ligand>
        <name>substrate</name>
    </ligand>
</feature>
<feature type="site" description="Transition state stabilizer" evidence="1">
    <location>
        <position position="182"/>
    </location>
</feature>
<proteinExistence type="inferred from homology"/>
<reference key="1">
    <citation type="submission" date="2006-08" db="EMBL/GenBank/DDBJ databases">
        <title>Complete sequence of chromosome 1 of Burkholderia cepacia AMMD.</title>
        <authorList>
            <person name="Copeland A."/>
            <person name="Lucas S."/>
            <person name="Lapidus A."/>
            <person name="Barry K."/>
            <person name="Detter J.C."/>
            <person name="Glavina del Rio T."/>
            <person name="Hammon N."/>
            <person name="Israni S."/>
            <person name="Pitluck S."/>
            <person name="Bruce D."/>
            <person name="Chain P."/>
            <person name="Malfatti S."/>
            <person name="Shin M."/>
            <person name="Vergez L."/>
            <person name="Schmutz J."/>
            <person name="Larimer F."/>
            <person name="Land M."/>
            <person name="Hauser L."/>
            <person name="Kyrpides N."/>
            <person name="Kim E."/>
            <person name="Parke J."/>
            <person name="Coenye T."/>
            <person name="Konstantinidis K."/>
            <person name="Ramette A."/>
            <person name="Tiedje J."/>
            <person name="Richardson P."/>
        </authorList>
    </citation>
    <scope>NUCLEOTIDE SEQUENCE [LARGE SCALE GENOMIC DNA]</scope>
    <source>
        <strain>ATCC BAA-244 / DSM 16087 / CCUG 44356 / LMG 19182 / AMMD</strain>
    </source>
</reference>
<keyword id="KW-0312">Gluconeogenesis</keyword>
<keyword id="KW-0324">Glycolysis</keyword>
<keyword id="KW-0413">Isomerase</keyword>
<gene>
    <name evidence="1" type="primary">gpmA</name>
    <name type="ordered locus">Bamb_2912</name>
</gene>